<comment type="function">
    <text evidence="1">Catalyzes the synthesis of Und-PP-GlcNAc-ManNAcA-Fuc4NAc (Lipid III), the third lipid-linked intermediate involved in ECA synthesis.</text>
</comment>
<comment type="catalytic activity">
    <reaction evidence="1">
        <text>beta-D-ManNAcA-(1-&gt;4)-alpha-D-GlcNAc-di-trans,octa-cis-undecaprenyl diphosphate + dTDP-4-acetamido-4,6-dideoxy-alpha-D-galactose = alpha-D-FucNAc4-(1-&gt;4)-beta-D-ManNAcA-(1-&gt;4)-D-GlcNAc-undecaprenyl diphosphate + dTDP + H(+)</text>
        <dbReference type="Rhea" id="RHEA:28759"/>
        <dbReference type="ChEBI" id="CHEBI:15378"/>
        <dbReference type="ChEBI" id="CHEBI:58369"/>
        <dbReference type="ChEBI" id="CHEBI:61495"/>
        <dbReference type="ChEBI" id="CHEBI:61496"/>
        <dbReference type="ChEBI" id="CHEBI:68493"/>
        <dbReference type="EC" id="2.4.1.325"/>
    </reaction>
</comment>
<comment type="pathway">
    <text evidence="1">Bacterial outer membrane biogenesis; enterobacterial common antigen biosynthesis.</text>
</comment>
<comment type="subcellular location">
    <subcellularLocation>
        <location evidence="1">Cell inner membrane</location>
        <topology evidence="1">Peripheral membrane protein</topology>
    </subcellularLocation>
</comment>
<comment type="similarity">
    <text evidence="1">Belongs to the glycosyltransferase 56 family.</text>
</comment>
<evidence type="ECO:0000255" key="1">
    <source>
        <dbReference type="HAMAP-Rule" id="MF_01002"/>
    </source>
</evidence>
<feature type="chain" id="PRO_1000134604" description="TDP-N-acetylfucosamine:lipid II N-acetylfucosaminyltransferase">
    <location>
        <begin position="1"/>
        <end position="359"/>
    </location>
</feature>
<reference key="1">
    <citation type="journal article" date="2011" name="J. Bacteriol.">
        <title>Comparative genomics of 28 Salmonella enterica isolates: evidence for CRISPR-mediated adaptive sublineage evolution.</title>
        <authorList>
            <person name="Fricke W.F."/>
            <person name="Mammel M.K."/>
            <person name="McDermott P.F."/>
            <person name="Tartera C."/>
            <person name="White D.G."/>
            <person name="Leclerc J.E."/>
            <person name="Ravel J."/>
            <person name="Cebula T.A."/>
        </authorList>
    </citation>
    <scope>NUCLEOTIDE SEQUENCE [LARGE SCALE GENOMIC DNA]</scope>
    <source>
        <strain>CT_02021853</strain>
    </source>
</reference>
<accession>B5FN86</accession>
<proteinExistence type="inferred from homology"/>
<organism>
    <name type="scientific">Salmonella dublin (strain CT_02021853)</name>
    <dbReference type="NCBI Taxonomy" id="439851"/>
    <lineage>
        <taxon>Bacteria</taxon>
        <taxon>Pseudomonadati</taxon>
        <taxon>Pseudomonadota</taxon>
        <taxon>Gammaproteobacteria</taxon>
        <taxon>Enterobacterales</taxon>
        <taxon>Enterobacteriaceae</taxon>
        <taxon>Salmonella</taxon>
    </lineage>
</organism>
<keyword id="KW-0997">Cell inner membrane</keyword>
<keyword id="KW-1003">Cell membrane</keyword>
<keyword id="KW-0328">Glycosyltransferase</keyword>
<keyword id="KW-0472">Membrane</keyword>
<keyword id="KW-0808">Transferase</keyword>
<name>WECF_SALDC</name>
<gene>
    <name evidence="1" type="primary">wecF</name>
    <name evidence="1" type="synonym">rffT</name>
    <name type="ordered locus">SeD_A4315</name>
</gene>
<protein>
    <recommendedName>
        <fullName evidence="1">TDP-N-acetylfucosamine:lipid II N-acetylfucosaminyltransferase</fullName>
        <ecNumber evidence="1">2.4.1.325</ecNumber>
    </recommendedName>
    <alternativeName>
        <fullName evidence="1">4-alpha-L-fucosyltransferase</fullName>
    </alternativeName>
    <alternativeName>
        <fullName evidence="1">TDP-Fuc4NAc:lipid II Fuc4NAc transferase</fullName>
        <shortName evidence="1">Fuc4NAc transferase</shortName>
    </alternativeName>
</protein>
<dbReference type="EC" id="2.4.1.325" evidence="1"/>
<dbReference type="EMBL" id="CP001144">
    <property type="protein sequence ID" value="ACH74540.1"/>
    <property type="molecule type" value="Genomic_DNA"/>
</dbReference>
<dbReference type="RefSeq" id="WP_000217198.1">
    <property type="nucleotide sequence ID" value="NC_011205.1"/>
</dbReference>
<dbReference type="CAZy" id="GT56">
    <property type="family name" value="Glycosyltransferase Family 56"/>
</dbReference>
<dbReference type="KEGG" id="sed:SeD_A4315"/>
<dbReference type="HOGENOM" id="CLU_066584_0_0_6"/>
<dbReference type="UniPathway" id="UPA00566"/>
<dbReference type="Proteomes" id="UP000008322">
    <property type="component" value="Chromosome"/>
</dbReference>
<dbReference type="GO" id="GO:0005886">
    <property type="term" value="C:plasma membrane"/>
    <property type="evidence" value="ECO:0007669"/>
    <property type="project" value="UniProtKB-SubCell"/>
</dbReference>
<dbReference type="GO" id="GO:0102031">
    <property type="term" value="F:4-acetamido-4,6-dideoxy-D-galactose transferase activity"/>
    <property type="evidence" value="ECO:0007669"/>
    <property type="project" value="UniProtKB-EC"/>
</dbReference>
<dbReference type="GO" id="GO:0008417">
    <property type="term" value="F:fucosyltransferase activity"/>
    <property type="evidence" value="ECO:0007669"/>
    <property type="project" value="InterPro"/>
</dbReference>
<dbReference type="GO" id="GO:0009246">
    <property type="term" value="P:enterobacterial common antigen biosynthetic process"/>
    <property type="evidence" value="ECO:0007669"/>
    <property type="project" value="UniProtKB-UniRule"/>
</dbReference>
<dbReference type="GO" id="GO:0036065">
    <property type="term" value="P:fucosylation"/>
    <property type="evidence" value="ECO:0007669"/>
    <property type="project" value="InterPro"/>
</dbReference>
<dbReference type="HAMAP" id="MF_01002">
    <property type="entry name" value="WecF_RffT"/>
    <property type="match status" value="1"/>
</dbReference>
<dbReference type="InterPro" id="IPR009993">
    <property type="entry name" value="WecF"/>
</dbReference>
<dbReference type="NCBIfam" id="NF002753">
    <property type="entry name" value="PRK02797.1-2"/>
    <property type="match status" value="1"/>
</dbReference>
<dbReference type="NCBIfam" id="NF002754">
    <property type="entry name" value="PRK02797.1-3"/>
    <property type="match status" value="1"/>
</dbReference>
<dbReference type="Pfam" id="PF07429">
    <property type="entry name" value="Glyco_transf_56"/>
    <property type="match status" value="1"/>
</dbReference>
<sequence>MTVLIHVLGSDIPHHNHTVLRFFNDTLAATSEHAREFMVAGEDNGFTESCPALSLRFYGSKKALAQAVIAKAKANRRQRFFFHGQFNTSLWLALLSGGIKPAQFYWHIWGADLYEVSNGLKFRLFYPLRRIAQGRVGCVFATRGDLSYFARQHPNVRGELLYFPTRMDPSLNAMAKECQRAGKLTILVGNSGDRSNQHIAALRAVYQQFGDTVNVVVPMGYPANNQAYIDEVRQAGLALFSAENLQILSEKMEFDAYLALLRQCDLGYFIFARQQGIGTLCLLIQADIPCVLNRDNPFWQDMAEQHLPVLFTTDDLNEQVVREAQRQLASVDKSGITFFSPNYLQPWHNALRIAAGEAE</sequence>